<organism>
    <name type="scientific">Helicobacter pylori (strain P12)</name>
    <dbReference type="NCBI Taxonomy" id="570508"/>
    <lineage>
        <taxon>Bacteria</taxon>
        <taxon>Pseudomonadati</taxon>
        <taxon>Campylobacterota</taxon>
        <taxon>Epsilonproteobacteria</taxon>
        <taxon>Campylobacterales</taxon>
        <taxon>Helicobacteraceae</taxon>
        <taxon>Helicobacter</taxon>
    </lineage>
</organism>
<accession>B6JLE0</accession>
<reference key="1">
    <citation type="submission" date="2008-10" db="EMBL/GenBank/DDBJ databases">
        <title>The complete genome sequence of Helicobacter pylori strain P12.</title>
        <authorList>
            <person name="Fischer W."/>
            <person name="Windhager L."/>
            <person name="Karnholz A."/>
            <person name="Zeiller M."/>
            <person name="Zimmer R."/>
            <person name="Haas R."/>
        </authorList>
    </citation>
    <scope>NUCLEOTIDE SEQUENCE [LARGE SCALE GENOMIC DNA]</scope>
    <source>
        <strain>P12</strain>
    </source>
</reference>
<sequence length="312" mass="34893">MAIYLDFENHIKEIQNEIELALIRGDEDAKEILEKRLEKEVKSIYSNLTDFQKLQLARHPDRPYAMDYIDLILKDKYEVFGDRHYNDDKAIVCFIGKIDNVPVVVIGEEKGRGTKNKLLRNFGMPNPCGYRKALKMAKFAEKFNLPILMLVDTAGAYPGIGAEERGQSEAIAKNLQEFASLKVPTISVIIGEGGSGGALAIAVADKLAMMEYSIFSVISPEGCAAILWDDPSKTEVAIKAMKITPRDLKEAGLIDDIILEPSKGAHRDKFSAANTIKEYFLDALRTIQQDPHFLDNRYQKLMSLGSFVEGMN</sequence>
<proteinExistence type="inferred from homology"/>
<feature type="chain" id="PRO_1000134495" description="Acetyl-coenzyme A carboxylase carboxyl transferase subunit alpha">
    <location>
        <begin position="1"/>
        <end position="312"/>
    </location>
</feature>
<feature type="domain" description="CoA carboxyltransferase C-terminal" evidence="2">
    <location>
        <begin position="36"/>
        <end position="286"/>
    </location>
</feature>
<name>ACCA_HELP2</name>
<protein>
    <recommendedName>
        <fullName evidence="1">Acetyl-coenzyme A carboxylase carboxyl transferase subunit alpha</fullName>
        <shortName evidence="1">ACCase subunit alpha</shortName>
        <shortName evidence="1">Acetyl-CoA carboxylase carboxyltransferase subunit alpha</shortName>
        <ecNumber evidence="1">2.1.3.15</ecNumber>
    </recommendedName>
</protein>
<dbReference type="EC" id="2.1.3.15" evidence="1"/>
<dbReference type="EMBL" id="CP001217">
    <property type="protein sequence ID" value="ACJ07718.1"/>
    <property type="molecule type" value="Genomic_DNA"/>
</dbReference>
<dbReference type="SMR" id="B6JLE0"/>
<dbReference type="KEGG" id="hpp:HPP12_0564"/>
<dbReference type="HOGENOM" id="CLU_015486_0_2_7"/>
<dbReference type="UniPathway" id="UPA00655">
    <property type="reaction ID" value="UER00711"/>
</dbReference>
<dbReference type="Proteomes" id="UP000008198">
    <property type="component" value="Chromosome"/>
</dbReference>
<dbReference type="GO" id="GO:0009317">
    <property type="term" value="C:acetyl-CoA carboxylase complex"/>
    <property type="evidence" value="ECO:0007669"/>
    <property type="project" value="InterPro"/>
</dbReference>
<dbReference type="GO" id="GO:0003989">
    <property type="term" value="F:acetyl-CoA carboxylase activity"/>
    <property type="evidence" value="ECO:0007669"/>
    <property type="project" value="InterPro"/>
</dbReference>
<dbReference type="GO" id="GO:0005524">
    <property type="term" value="F:ATP binding"/>
    <property type="evidence" value="ECO:0007669"/>
    <property type="project" value="UniProtKB-KW"/>
</dbReference>
<dbReference type="GO" id="GO:0016743">
    <property type="term" value="F:carboxyl- or carbamoyltransferase activity"/>
    <property type="evidence" value="ECO:0007669"/>
    <property type="project" value="UniProtKB-UniRule"/>
</dbReference>
<dbReference type="GO" id="GO:0006633">
    <property type="term" value="P:fatty acid biosynthetic process"/>
    <property type="evidence" value="ECO:0007669"/>
    <property type="project" value="UniProtKB-KW"/>
</dbReference>
<dbReference type="GO" id="GO:2001295">
    <property type="term" value="P:malonyl-CoA biosynthetic process"/>
    <property type="evidence" value="ECO:0007669"/>
    <property type="project" value="UniProtKB-UniRule"/>
</dbReference>
<dbReference type="Gene3D" id="3.90.226.10">
    <property type="entry name" value="2-enoyl-CoA Hydratase, Chain A, domain 1"/>
    <property type="match status" value="1"/>
</dbReference>
<dbReference type="HAMAP" id="MF_00823">
    <property type="entry name" value="AcetylCoA_CT_alpha"/>
    <property type="match status" value="1"/>
</dbReference>
<dbReference type="InterPro" id="IPR001095">
    <property type="entry name" value="Acetyl_CoA_COase_a_su"/>
</dbReference>
<dbReference type="InterPro" id="IPR029045">
    <property type="entry name" value="ClpP/crotonase-like_dom_sf"/>
</dbReference>
<dbReference type="InterPro" id="IPR011763">
    <property type="entry name" value="COA_CT_C"/>
</dbReference>
<dbReference type="NCBIfam" id="TIGR00513">
    <property type="entry name" value="accA"/>
    <property type="match status" value="1"/>
</dbReference>
<dbReference type="NCBIfam" id="NF041504">
    <property type="entry name" value="AccA_sub"/>
    <property type="match status" value="1"/>
</dbReference>
<dbReference type="NCBIfam" id="NF004344">
    <property type="entry name" value="PRK05724.1"/>
    <property type="match status" value="1"/>
</dbReference>
<dbReference type="PANTHER" id="PTHR42853">
    <property type="entry name" value="ACETYL-COENZYME A CARBOXYLASE CARBOXYL TRANSFERASE SUBUNIT ALPHA"/>
    <property type="match status" value="1"/>
</dbReference>
<dbReference type="PANTHER" id="PTHR42853:SF3">
    <property type="entry name" value="ACETYL-COENZYME A CARBOXYLASE CARBOXYL TRANSFERASE SUBUNIT ALPHA, CHLOROPLASTIC"/>
    <property type="match status" value="1"/>
</dbReference>
<dbReference type="Pfam" id="PF03255">
    <property type="entry name" value="ACCA"/>
    <property type="match status" value="1"/>
</dbReference>
<dbReference type="PRINTS" id="PR01069">
    <property type="entry name" value="ACCCTRFRASEA"/>
</dbReference>
<dbReference type="SUPFAM" id="SSF52096">
    <property type="entry name" value="ClpP/crotonase"/>
    <property type="match status" value="1"/>
</dbReference>
<dbReference type="PROSITE" id="PS50989">
    <property type="entry name" value="COA_CT_CTER"/>
    <property type="match status" value="1"/>
</dbReference>
<gene>
    <name evidence="1" type="primary">accA</name>
    <name type="ordered locus">HPP12_0564</name>
</gene>
<keyword id="KW-0067">ATP-binding</keyword>
<keyword id="KW-0963">Cytoplasm</keyword>
<keyword id="KW-0275">Fatty acid biosynthesis</keyword>
<keyword id="KW-0276">Fatty acid metabolism</keyword>
<keyword id="KW-0444">Lipid biosynthesis</keyword>
<keyword id="KW-0443">Lipid metabolism</keyword>
<keyword id="KW-0547">Nucleotide-binding</keyword>
<keyword id="KW-0808">Transferase</keyword>
<evidence type="ECO:0000255" key="1">
    <source>
        <dbReference type="HAMAP-Rule" id="MF_00823"/>
    </source>
</evidence>
<evidence type="ECO:0000255" key="2">
    <source>
        <dbReference type="PROSITE-ProRule" id="PRU01137"/>
    </source>
</evidence>
<comment type="function">
    <text evidence="1">Component of the acetyl coenzyme A carboxylase (ACC) complex. First, biotin carboxylase catalyzes the carboxylation of biotin on its carrier protein (BCCP) and then the CO(2) group is transferred by the carboxyltransferase to acetyl-CoA to form malonyl-CoA.</text>
</comment>
<comment type="catalytic activity">
    <reaction evidence="1">
        <text>N(6)-carboxybiotinyl-L-lysyl-[protein] + acetyl-CoA = N(6)-biotinyl-L-lysyl-[protein] + malonyl-CoA</text>
        <dbReference type="Rhea" id="RHEA:54728"/>
        <dbReference type="Rhea" id="RHEA-COMP:10505"/>
        <dbReference type="Rhea" id="RHEA-COMP:10506"/>
        <dbReference type="ChEBI" id="CHEBI:57288"/>
        <dbReference type="ChEBI" id="CHEBI:57384"/>
        <dbReference type="ChEBI" id="CHEBI:83144"/>
        <dbReference type="ChEBI" id="CHEBI:83145"/>
        <dbReference type="EC" id="2.1.3.15"/>
    </reaction>
</comment>
<comment type="pathway">
    <text evidence="1">Lipid metabolism; malonyl-CoA biosynthesis; malonyl-CoA from acetyl-CoA: step 1/1.</text>
</comment>
<comment type="subunit">
    <text evidence="1">Acetyl-CoA carboxylase is a heterohexamer composed of biotin carboxyl carrier protein (AccB), biotin carboxylase (AccC) and two subunits each of ACCase subunit alpha (AccA) and ACCase subunit beta (AccD).</text>
</comment>
<comment type="subcellular location">
    <subcellularLocation>
        <location evidence="1">Cytoplasm</location>
    </subcellularLocation>
</comment>
<comment type="similarity">
    <text evidence="1">Belongs to the AccA family.</text>
</comment>